<sequence>MMIFRFVTTLAASLPLLTFAAPISFSHAKNEAVKIYRDHPVSFYCGCEIRWQGKKGIPDLESCGYQVRKNENRASRIEWEHVVPAWQFGHQLQCWQQGGRKNCTRTSPEFNQMEADLHNLTPAIGEVNGDRSNFSFSQWNGVDGVTYGQCEMQVNFKERTAMPPERARGAIARTYLYMSEQYGLRLSKAQSQLMQAWNNQYPVSEWECVRDQRIEKVQGNSNRFVREQCPN</sequence>
<keyword id="KW-0002">3D-structure</keyword>
<keyword id="KW-0255">Endonuclease</keyword>
<keyword id="KW-0378">Hydrolase</keyword>
<keyword id="KW-0540">Nuclease</keyword>
<keyword id="KW-1185">Reference proteome</keyword>
<keyword id="KW-0964">Secreted</keyword>
<keyword id="KW-0732">Signal</keyword>
<proteinExistence type="evidence at protein level"/>
<organism>
    <name type="scientific">Vibrio cholerae serotype O1 (strain ATCC 39315 / El Tor Inaba N16961)</name>
    <dbReference type="NCBI Taxonomy" id="243277"/>
    <lineage>
        <taxon>Bacteria</taxon>
        <taxon>Pseudomonadati</taxon>
        <taxon>Pseudomonadota</taxon>
        <taxon>Gammaproteobacteria</taxon>
        <taxon>Vibrionales</taxon>
        <taxon>Vibrionaceae</taxon>
        <taxon>Vibrio</taxon>
    </lineage>
</organism>
<dbReference type="EC" id="3.1.21.-"/>
<dbReference type="EMBL" id="M16499">
    <property type="protein sequence ID" value="AAA27516.1"/>
    <property type="molecule type" value="Genomic_DNA"/>
</dbReference>
<dbReference type="EMBL" id="AE003852">
    <property type="protein sequence ID" value="AAF93643.1"/>
    <property type="molecule type" value="Genomic_DNA"/>
</dbReference>
<dbReference type="PIR" id="A26509">
    <property type="entry name" value="A26509"/>
</dbReference>
<dbReference type="PIR" id="C82319">
    <property type="entry name" value="C82319"/>
</dbReference>
<dbReference type="RefSeq" id="NP_230124.1">
    <property type="nucleotide sequence ID" value="NC_002505.1"/>
</dbReference>
<dbReference type="PDB" id="2VND">
    <property type="method" value="X-ray"/>
    <property type="resolution" value="1.70 A"/>
    <property type="chains" value="A=1-231"/>
</dbReference>
<dbReference type="PDBsum" id="2VND"/>
<dbReference type="SMR" id="P08038"/>
<dbReference type="STRING" id="243277.VC_0470"/>
<dbReference type="DNASU" id="2615132"/>
<dbReference type="EnsemblBacteria" id="AAF93643">
    <property type="protein sequence ID" value="AAF93643"/>
    <property type="gene ID" value="VC_0470"/>
</dbReference>
<dbReference type="KEGG" id="vch:VC_0470"/>
<dbReference type="PATRIC" id="fig|243277.26.peg.443"/>
<dbReference type="eggNOG" id="COG2356">
    <property type="taxonomic scope" value="Bacteria"/>
</dbReference>
<dbReference type="HOGENOM" id="CLU_070541_0_0_6"/>
<dbReference type="EvolutionaryTrace" id="P08038"/>
<dbReference type="Proteomes" id="UP000000584">
    <property type="component" value="Chromosome 1"/>
</dbReference>
<dbReference type="GO" id="GO:0005576">
    <property type="term" value="C:extracellular region"/>
    <property type="evidence" value="ECO:0007669"/>
    <property type="project" value="UniProtKB-SubCell"/>
</dbReference>
<dbReference type="GO" id="GO:0004536">
    <property type="term" value="F:DNA nuclease activity"/>
    <property type="evidence" value="ECO:0000315"/>
    <property type="project" value="TIGR"/>
</dbReference>
<dbReference type="GO" id="GO:0004519">
    <property type="term" value="F:endonuclease activity"/>
    <property type="evidence" value="ECO:0007669"/>
    <property type="project" value="UniProtKB-KW"/>
</dbReference>
<dbReference type="GO" id="GO:0006308">
    <property type="term" value="P:DNA catabolic process"/>
    <property type="evidence" value="ECO:0000315"/>
    <property type="project" value="TIGR"/>
</dbReference>
<dbReference type="InterPro" id="IPR007346">
    <property type="entry name" value="Endonuclease-I"/>
</dbReference>
<dbReference type="InterPro" id="IPR044925">
    <property type="entry name" value="His-Me_finger_sf"/>
</dbReference>
<dbReference type="NCBIfam" id="NF011716">
    <property type="entry name" value="PRK15137.1"/>
    <property type="match status" value="1"/>
</dbReference>
<dbReference type="PANTHER" id="PTHR33607">
    <property type="entry name" value="ENDONUCLEASE-1"/>
    <property type="match status" value="1"/>
</dbReference>
<dbReference type="PANTHER" id="PTHR33607:SF2">
    <property type="entry name" value="ENDONUCLEASE-1"/>
    <property type="match status" value="1"/>
</dbReference>
<dbReference type="Pfam" id="PF04231">
    <property type="entry name" value="Endonuclease_1"/>
    <property type="match status" value="1"/>
</dbReference>
<dbReference type="SUPFAM" id="SSF54060">
    <property type="entry name" value="His-Me finger endonucleases"/>
    <property type="match status" value="1"/>
</dbReference>
<gene>
    <name type="primary">dns</name>
    <name type="ordered locus">VC_0470</name>
</gene>
<reference key="1">
    <citation type="journal article" date="1987" name="Gene">
        <title>Extracellular proteins of Vibrio cholerae: molecular cloning, nucleotide sequence and characterization of the deoxyribonuclease (DNase) together with its periplasmic localization in Escherichia coli K-12.</title>
        <authorList>
            <person name="Focareta T."/>
            <person name="Manning P.A."/>
        </authorList>
    </citation>
    <scope>NUCLEOTIDE SEQUENCE [GENOMIC DNA]</scope>
</reference>
<reference key="2">
    <citation type="submission" date="1987-11" db="EMBL/GenBank/DDBJ databases">
        <authorList>
            <person name="Manning P.A."/>
        </authorList>
    </citation>
    <scope>SEQUENCE REVISION</scope>
</reference>
<reference key="3">
    <citation type="journal article" date="2000" name="Nature">
        <title>DNA sequence of both chromosomes of the cholera pathogen Vibrio cholerae.</title>
        <authorList>
            <person name="Heidelberg J.F."/>
            <person name="Eisen J.A."/>
            <person name="Nelson W.C."/>
            <person name="Clayton R.A."/>
            <person name="Gwinn M.L."/>
            <person name="Dodson R.J."/>
            <person name="Haft D.H."/>
            <person name="Hickey E.K."/>
            <person name="Peterson J.D."/>
            <person name="Umayam L.A."/>
            <person name="Gill S.R."/>
            <person name="Nelson K.E."/>
            <person name="Read T.D."/>
            <person name="Tettelin H."/>
            <person name="Richardson D.L."/>
            <person name="Ermolaeva M.D."/>
            <person name="Vamathevan J.J."/>
            <person name="Bass S."/>
            <person name="Qin H."/>
            <person name="Dragoi I."/>
            <person name="Sellers P."/>
            <person name="McDonald L.A."/>
            <person name="Utterback T.R."/>
            <person name="Fleischmann R.D."/>
            <person name="Nierman W.C."/>
            <person name="White O."/>
            <person name="Salzberg S.L."/>
            <person name="Smith H.O."/>
            <person name="Colwell R.R."/>
            <person name="Mekalanos J.J."/>
            <person name="Venter J.C."/>
            <person name="Fraser C.M."/>
        </authorList>
    </citation>
    <scope>NUCLEOTIDE SEQUENCE [LARGE SCALE GENOMIC DNA]</scope>
    <source>
        <strain>ATCC 39315 / El Tor Inaba N16961</strain>
    </source>
</reference>
<protein>
    <recommendedName>
        <fullName>Extracellular deoxyribonuclease</fullName>
        <shortName>DNase</shortName>
        <ecNumber>3.1.21.-</ecNumber>
    </recommendedName>
</protein>
<accession>P08038</accession>
<accession>Q9KUP5</accession>
<name>DRNE_VIBCH</name>
<feature type="signal peptide" evidence="1">
    <location>
        <begin position="1"/>
        <end position="20"/>
    </location>
</feature>
<feature type="chain" id="PRO_0000007833" description="Extracellular deoxyribonuclease">
    <location>
        <begin position="21"/>
        <end position="231"/>
    </location>
</feature>
<feature type="sequence conflict" description="In Ref. 1; AAA27516." evidence="2" ref="1">
    <original>R</original>
    <variation>P</variation>
    <location>
        <position position="50"/>
    </location>
</feature>
<feature type="sequence conflict" description="In Ref. 1; AAA27516." evidence="2" ref="1">
    <original>PPERARG</original>
    <variation>AQSVQR</variation>
    <location>
        <begin position="163"/>
        <end position="169"/>
    </location>
</feature>
<feature type="sequence conflict" description="In Ref. 1; AAA27516." evidence="2" ref="1">
    <original>S</original>
    <variation>T</variation>
    <location>
        <position position="191"/>
    </location>
</feature>
<feature type="sequence conflict" description="In Ref. 1; AAA27516." evidence="2" ref="1">
    <original>RFVREQ</original>
    <variation>LLCACK</variation>
    <location>
        <begin position="223"/>
        <end position="228"/>
    </location>
</feature>
<feature type="helix" evidence="3">
    <location>
        <begin position="26"/>
        <end position="36"/>
    </location>
</feature>
<feature type="turn" evidence="3">
    <location>
        <begin position="43"/>
        <end position="45"/>
    </location>
</feature>
<feature type="strand" evidence="3">
    <location>
        <begin position="48"/>
        <end position="52"/>
    </location>
</feature>
<feature type="strand" evidence="3">
    <location>
        <begin position="55"/>
        <end position="59"/>
    </location>
</feature>
<feature type="helix" evidence="3">
    <location>
        <begin position="61"/>
        <end position="63"/>
    </location>
</feature>
<feature type="helix" evidence="3">
    <location>
        <begin position="71"/>
        <end position="74"/>
    </location>
</feature>
<feature type="strand" evidence="3">
    <location>
        <begin position="76"/>
        <end position="83"/>
    </location>
</feature>
<feature type="helix" evidence="3">
    <location>
        <begin position="85"/>
        <end position="89"/>
    </location>
</feature>
<feature type="helix" evidence="3">
    <location>
        <begin position="93"/>
        <end position="106"/>
    </location>
</feature>
<feature type="helix" evidence="3">
    <location>
        <begin position="108"/>
        <end position="115"/>
    </location>
</feature>
<feature type="helix" evidence="3">
    <location>
        <begin position="117"/>
        <end position="119"/>
    </location>
</feature>
<feature type="strand" evidence="3">
    <location>
        <begin position="120"/>
        <end position="124"/>
    </location>
</feature>
<feature type="helix" evidence="3">
    <location>
        <begin position="125"/>
        <end position="131"/>
    </location>
</feature>
<feature type="strand" evidence="3">
    <location>
        <begin position="144"/>
        <end position="148"/>
    </location>
</feature>
<feature type="strand" evidence="3">
    <location>
        <begin position="150"/>
        <end position="155"/>
    </location>
</feature>
<feature type="turn" evidence="3">
    <location>
        <begin position="156"/>
        <end position="159"/>
    </location>
</feature>
<feature type="strand" evidence="3">
    <location>
        <begin position="160"/>
        <end position="162"/>
    </location>
</feature>
<feature type="helix" evidence="3">
    <location>
        <begin position="165"/>
        <end position="182"/>
    </location>
</feature>
<feature type="helix" evidence="3">
    <location>
        <begin position="188"/>
        <end position="200"/>
    </location>
</feature>
<feature type="helix" evidence="3">
    <location>
        <begin position="205"/>
        <end position="218"/>
    </location>
</feature>
<feature type="helix" evidence="3">
    <location>
        <begin position="223"/>
        <end position="226"/>
    </location>
</feature>
<evidence type="ECO:0000255" key="1"/>
<evidence type="ECO:0000305" key="2"/>
<evidence type="ECO:0007829" key="3">
    <source>
        <dbReference type="PDB" id="2VND"/>
    </source>
</evidence>
<comment type="subcellular location">
    <subcellularLocation>
        <location>Secreted</location>
    </subcellularLocation>
</comment>
<comment type="similarity">
    <text evidence="2">Belongs to the EndA/NucM nuclease family.</text>
</comment>